<keyword id="KW-0067">ATP-binding</keyword>
<keyword id="KW-0436">Ligase</keyword>
<keyword id="KW-0496">Mitochondrion</keyword>
<keyword id="KW-0547">Nucleotide-binding</keyword>
<keyword id="KW-0648">Protein biosynthesis</keyword>
<keyword id="KW-1185">Reference proteome</keyword>
<evidence type="ECO:0000255" key="1">
    <source>
        <dbReference type="HAMAP-Rule" id="MF_03147"/>
    </source>
</evidence>
<name>GATB_DICDI</name>
<sequence length="538" mass="61683">MNYLNKINKINNKLFYSTTSSSNGIKNVVINNKDYLKSLKTNEIWELIVGIEVHAQTKTKEKLFSNSLNIGSMEGFKANSRVSFVDAAFPGALPVLNDKCVEQAIKTGLSIGGTINRYSFFDRKHYFYQDLPQGYQITQLTEPIVKGGSIELELSDGRQHQIRISHIQLEQDSGKSIHDLHPTKSLVDLNRAGIGLMEIVSHADFTSSEQVGCYIQKLQHLLKHIGSSDANMQFGEMRCDVNISVHKPNTEFGTRVELKNMISAKAIVSSIDSEAIRQIDLLENQNKIQRETRGFNQETGETYHLRTKEDEVDYRFFPDPDLPPLIISSERIETIKQQLGELPQDMKKRLIKQYSLTNYDAELLIQDQSIAKFFENSIIFNQNHNQKQRDIKKILNFLLRDIFSWLNSNNIQDFNSIINENQLSIEKFTQLLDLIEQGYISSNIGKTILFQILNGSDNRSPKDLIDSQGLSQISDDSLLDQLVQQLVENHPNEVTEYHQGKQRVYKFFMGEIMKKTKGRSNPEIVNNLLKKYLDLKKK</sequence>
<proteinExistence type="inferred from homology"/>
<dbReference type="EC" id="6.3.5.-" evidence="1"/>
<dbReference type="EMBL" id="AAFI02000004">
    <property type="protein sequence ID" value="EAL72977.1"/>
    <property type="molecule type" value="Genomic_DNA"/>
</dbReference>
<dbReference type="SMR" id="Q55ER8"/>
<dbReference type="FunCoup" id="Q55ER8">
    <property type="interactions" value="210"/>
</dbReference>
<dbReference type="STRING" id="44689.Q55ER8"/>
<dbReference type="PaxDb" id="44689-DDB0266934"/>
<dbReference type="EnsemblProtists" id="EAL72977">
    <property type="protein sequence ID" value="EAL72977"/>
    <property type="gene ID" value="DDB_G0268776"/>
</dbReference>
<dbReference type="KEGG" id="ddi:DDB_G0268776"/>
<dbReference type="dictyBase" id="DDB_G0268776">
    <property type="gene designation" value="gatB"/>
</dbReference>
<dbReference type="VEuPathDB" id="AmoebaDB:DDB_G0268776"/>
<dbReference type="eggNOG" id="KOG2438">
    <property type="taxonomic scope" value="Eukaryota"/>
</dbReference>
<dbReference type="HOGENOM" id="CLU_019240_1_1_1"/>
<dbReference type="InParanoid" id="Q55ER8"/>
<dbReference type="OMA" id="ARKWWMG"/>
<dbReference type="PhylomeDB" id="Q55ER8"/>
<dbReference type="PRO" id="PR:Q55ER8"/>
<dbReference type="Proteomes" id="UP000002195">
    <property type="component" value="Chromosome 1"/>
</dbReference>
<dbReference type="GO" id="GO:0030956">
    <property type="term" value="C:glutamyl-tRNA(Gln) amidotransferase complex"/>
    <property type="evidence" value="ECO:0000318"/>
    <property type="project" value="GO_Central"/>
</dbReference>
<dbReference type="GO" id="GO:0005739">
    <property type="term" value="C:mitochondrion"/>
    <property type="evidence" value="ECO:0000318"/>
    <property type="project" value="GO_Central"/>
</dbReference>
<dbReference type="GO" id="GO:0005524">
    <property type="term" value="F:ATP binding"/>
    <property type="evidence" value="ECO:0007669"/>
    <property type="project" value="UniProtKB-KW"/>
</dbReference>
<dbReference type="GO" id="GO:0050567">
    <property type="term" value="F:glutaminyl-tRNA synthase (glutamine-hydrolyzing) activity"/>
    <property type="evidence" value="ECO:0000318"/>
    <property type="project" value="GO_Central"/>
</dbReference>
<dbReference type="GO" id="GO:0070681">
    <property type="term" value="P:glutaminyl-tRNAGln biosynthesis via transamidation"/>
    <property type="evidence" value="ECO:0000318"/>
    <property type="project" value="GO_Central"/>
</dbReference>
<dbReference type="GO" id="GO:0032543">
    <property type="term" value="P:mitochondrial translation"/>
    <property type="evidence" value="ECO:0000318"/>
    <property type="project" value="GO_Central"/>
</dbReference>
<dbReference type="FunFam" id="1.10.10.410:FF:000001">
    <property type="entry name" value="Aspartyl/glutamyl-tRNA(Asn/Gln) amidotransferase subunit B"/>
    <property type="match status" value="1"/>
</dbReference>
<dbReference type="Gene3D" id="1.10.10.410">
    <property type="match status" value="1"/>
</dbReference>
<dbReference type="HAMAP" id="MF_00121">
    <property type="entry name" value="GatB"/>
    <property type="match status" value="1"/>
</dbReference>
<dbReference type="InterPro" id="IPR017959">
    <property type="entry name" value="Asn/Gln-tRNA_amidoTrfase_suB/E"/>
</dbReference>
<dbReference type="InterPro" id="IPR006075">
    <property type="entry name" value="Asn/Gln-tRNA_Trfase_suB/E_cat"/>
</dbReference>
<dbReference type="InterPro" id="IPR018027">
    <property type="entry name" value="Asn/Gln_amidotransferase"/>
</dbReference>
<dbReference type="InterPro" id="IPR003789">
    <property type="entry name" value="Asn/Gln_tRNA_amidoTrase-B-like"/>
</dbReference>
<dbReference type="InterPro" id="IPR004413">
    <property type="entry name" value="GatB"/>
</dbReference>
<dbReference type="InterPro" id="IPR023168">
    <property type="entry name" value="GatB_Yqey_C_2"/>
</dbReference>
<dbReference type="InterPro" id="IPR017958">
    <property type="entry name" value="Gln-tRNA_amidoTrfase_suB_CS"/>
</dbReference>
<dbReference type="InterPro" id="IPR014746">
    <property type="entry name" value="Gln_synth/guanido_kin_cat_dom"/>
</dbReference>
<dbReference type="NCBIfam" id="TIGR00133">
    <property type="entry name" value="gatB"/>
    <property type="match status" value="1"/>
</dbReference>
<dbReference type="NCBIfam" id="NF004012">
    <property type="entry name" value="PRK05477.1-2"/>
    <property type="match status" value="1"/>
</dbReference>
<dbReference type="NCBIfam" id="NF004014">
    <property type="entry name" value="PRK05477.1-4"/>
    <property type="match status" value="1"/>
</dbReference>
<dbReference type="PANTHER" id="PTHR11659">
    <property type="entry name" value="GLUTAMYL-TRNA GLN AMIDOTRANSFERASE SUBUNIT B MITOCHONDRIAL AND PROKARYOTIC PET112-RELATED"/>
    <property type="match status" value="1"/>
</dbReference>
<dbReference type="PANTHER" id="PTHR11659:SF0">
    <property type="entry name" value="GLUTAMYL-TRNA(GLN) AMIDOTRANSFERASE SUBUNIT B, MITOCHONDRIAL"/>
    <property type="match status" value="1"/>
</dbReference>
<dbReference type="Pfam" id="PF02934">
    <property type="entry name" value="GatB_N"/>
    <property type="match status" value="1"/>
</dbReference>
<dbReference type="Pfam" id="PF02637">
    <property type="entry name" value="GatB_Yqey"/>
    <property type="match status" value="1"/>
</dbReference>
<dbReference type="SMART" id="SM00845">
    <property type="entry name" value="GatB_Yqey"/>
    <property type="match status" value="1"/>
</dbReference>
<dbReference type="SUPFAM" id="SSF89095">
    <property type="entry name" value="GatB/YqeY motif"/>
    <property type="match status" value="1"/>
</dbReference>
<dbReference type="SUPFAM" id="SSF55931">
    <property type="entry name" value="Glutamine synthetase/guanido kinase"/>
    <property type="match status" value="1"/>
</dbReference>
<dbReference type="PROSITE" id="PS01234">
    <property type="entry name" value="GATB"/>
    <property type="match status" value="1"/>
</dbReference>
<organism>
    <name type="scientific">Dictyostelium discoideum</name>
    <name type="common">Social amoeba</name>
    <dbReference type="NCBI Taxonomy" id="44689"/>
    <lineage>
        <taxon>Eukaryota</taxon>
        <taxon>Amoebozoa</taxon>
        <taxon>Evosea</taxon>
        <taxon>Eumycetozoa</taxon>
        <taxon>Dictyostelia</taxon>
        <taxon>Dictyosteliales</taxon>
        <taxon>Dictyosteliaceae</taxon>
        <taxon>Dictyostelium</taxon>
    </lineage>
</organism>
<reference key="1">
    <citation type="journal article" date="2005" name="Nature">
        <title>The genome of the social amoeba Dictyostelium discoideum.</title>
        <authorList>
            <person name="Eichinger L."/>
            <person name="Pachebat J.A."/>
            <person name="Gloeckner G."/>
            <person name="Rajandream M.A."/>
            <person name="Sucgang R."/>
            <person name="Berriman M."/>
            <person name="Song J."/>
            <person name="Olsen R."/>
            <person name="Szafranski K."/>
            <person name="Xu Q."/>
            <person name="Tunggal B."/>
            <person name="Kummerfeld S."/>
            <person name="Madera M."/>
            <person name="Konfortov B.A."/>
            <person name="Rivero F."/>
            <person name="Bankier A.T."/>
            <person name="Lehmann R."/>
            <person name="Hamlin N."/>
            <person name="Davies R."/>
            <person name="Gaudet P."/>
            <person name="Fey P."/>
            <person name="Pilcher K."/>
            <person name="Chen G."/>
            <person name="Saunders D."/>
            <person name="Sodergren E.J."/>
            <person name="Davis P."/>
            <person name="Kerhornou A."/>
            <person name="Nie X."/>
            <person name="Hall N."/>
            <person name="Anjard C."/>
            <person name="Hemphill L."/>
            <person name="Bason N."/>
            <person name="Farbrother P."/>
            <person name="Desany B."/>
            <person name="Just E."/>
            <person name="Morio T."/>
            <person name="Rost R."/>
            <person name="Churcher C.M."/>
            <person name="Cooper J."/>
            <person name="Haydock S."/>
            <person name="van Driessche N."/>
            <person name="Cronin A."/>
            <person name="Goodhead I."/>
            <person name="Muzny D.M."/>
            <person name="Mourier T."/>
            <person name="Pain A."/>
            <person name="Lu M."/>
            <person name="Harper D."/>
            <person name="Lindsay R."/>
            <person name="Hauser H."/>
            <person name="James K.D."/>
            <person name="Quiles M."/>
            <person name="Madan Babu M."/>
            <person name="Saito T."/>
            <person name="Buchrieser C."/>
            <person name="Wardroper A."/>
            <person name="Felder M."/>
            <person name="Thangavelu M."/>
            <person name="Johnson D."/>
            <person name="Knights A."/>
            <person name="Loulseged H."/>
            <person name="Mungall K.L."/>
            <person name="Oliver K."/>
            <person name="Price C."/>
            <person name="Quail M.A."/>
            <person name="Urushihara H."/>
            <person name="Hernandez J."/>
            <person name="Rabbinowitsch E."/>
            <person name="Steffen D."/>
            <person name="Sanders M."/>
            <person name="Ma J."/>
            <person name="Kohara Y."/>
            <person name="Sharp S."/>
            <person name="Simmonds M.N."/>
            <person name="Spiegler S."/>
            <person name="Tivey A."/>
            <person name="Sugano S."/>
            <person name="White B."/>
            <person name="Walker D."/>
            <person name="Woodward J.R."/>
            <person name="Winckler T."/>
            <person name="Tanaka Y."/>
            <person name="Shaulsky G."/>
            <person name="Schleicher M."/>
            <person name="Weinstock G.M."/>
            <person name="Rosenthal A."/>
            <person name="Cox E.C."/>
            <person name="Chisholm R.L."/>
            <person name="Gibbs R.A."/>
            <person name="Loomis W.F."/>
            <person name="Platzer M."/>
            <person name="Kay R.R."/>
            <person name="Williams J.G."/>
            <person name="Dear P.H."/>
            <person name="Noegel A.A."/>
            <person name="Barrell B.G."/>
            <person name="Kuspa A."/>
        </authorList>
    </citation>
    <scope>NUCLEOTIDE SEQUENCE [LARGE SCALE GENOMIC DNA]</scope>
    <source>
        <strain>AX4</strain>
    </source>
</reference>
<protein>
    <recommendedName>
        <fullName evidence="1">Glutamyl-tRNA(Gln) amidotransferase subunit B, mitochondrial</fullName>
        <shortName evidence="1">Glu-AdT subunit B</shortName>
        <ecNumber evidence="1">6.3.5.-</ecNumber>
    </recommendedName>
</protein>
<gene>
    <name type="ORF">DDB_G0268776</name>
</gene>
<accession>Q55ER8</accession>
<comment type="function">
    <text evidence="1">Allows the formation of correctly charged Gln-tRNA(Gln) through the transamidation of misacylated Glu-tRNA(Gln) in the mitochondria. The reaction takes place in the presence of glutamine and ATP through an activated gamma-phospho-Glu-tRNA(Gln).</text>
</comment>
<comment type="catalytic activity">
    <reaction evidence="1">
        <text>L-glutamyl-tRNA(Gln) + L-glutamine + ATP + H2O = L-glutaminyl-tRNA(Gln) + L-glutamate + ADP + phosphate + H(+)</text>
        <dbReference type="Rhea" id="RHEA:17521"/>
        <dbReference type="Rhea" id="RHEA-COMP:9681"/>
        <dbReference type="Rhea" id="RHEA-COMP:9684"/>
        <dbReference type="ChEBI" id="CHEBI:15377"/>
        <dbReference type="ChEBI" id="CHEBI:15378"/>
        <dbReference type="ChEBI" id="CHEBI:29985"/>
        <dbReference type="ChEBI" id="CHEBI:30616"/>
        <dbReference type="ChEBI" id="CHEBI:43474"/>
        <dbReference type="ChEBI" id="CHEBI:58359"/>
        <dbReference type="ChEBI" id="CHEBI:78520"/>
        <dbReference type="ChEBI" id="CHEBI:78521"/>
        <dbReference type="ChEBI" id="CHEBI:456216"/>
    </reaction>
</comment>
<comment type="subunit">
    <text evidence="1">Subunit of the heterotrimeric GatCAB amidotransferase (AdT) complex, composed of A, B and C subunits.</text>
</comment>
<comment type="subcellular location">
    <subcellularLocation>
        <location evidence="1">Mitochondrion</location>
    </subcellularLocation>
</comment>
<comment type="miscellaneous">
    <text evidence="1">This protein may be expected to contain an N-terminal transit peptide but none has been predicted.</text>
</comment>
<comment type="similarity">
    <text evidence="1">Belongs to the GatB/GatE family. GatB subfamily.</text>
</comment>
<feature type="chain" id="PRO_0000330433" description="Glutamyl-tRNA(Gln) amidotransferase subunit B, mitochondrial">
    <location>
        <begin position="1"/>
        <end position="538"/>
    </location>
</feature>